<comment type="function">
    <text evidence="2 3">May act as a dimethylsulfoniopropionate (DMSP) in vitro, releasing dimethyl sulfide (DMS). DMS is the principal form by which sulfur is transported from oceans to the atmosphere (PubMed:20880330). The real activity of the protein is however subject to debate and it is unclear whether it constitutes a real dimethylsulfoniopropionate lyase in vivo (Probable).</text>
</comment>
<comment type="catalytic activity">
    <reaction evidence="1">
        <text>S,S-dimethyl-beta-propiothetin = acrylate + dimethyl sulfide + H(+)</text>
        <dbReference type="Rhea" id="RHEA:19965"/>
        <dbReference type="ChEBI" id="CHEBI:15378"/>
        <dbReference type="ChEBI" id="CHEBI:16457"/>
        <dbReference type="ChEBI" id="CHEBI:17437"/>
        <dbReference type="ChEBI" id="CHEBI:37080"/>
        <dbReference type="EC" id="4.4.1.3"/>
    </reaction>
</comment>
<comment type="cofactor">
    <cofactor evidence="1">
        <name>a divalent metal cation</name>
        <dbReference type="ChEBI" id="CHEBI:60240"/>
    </cofactor>
    <text evidence="1">Zn(2+) probably constitutes the cofactor in vivo.</text>
</comment>
<comment type="subunit">
    <text evidence="1">Homodimer.</text>
</comment>
<comment type="disruption phenotype">
    <text evidence="2">Decreased dimethylsulfoniopropionate (DMSP) catabolism.</text>
</comment>
<comment type="similarity">
    <text evidence="3">Belongs to the non-heme iron-dependent dioxygenase family.</text>
</comment>
<gene>
    <name evidence="4" type="primary">dddQ</name>
    <name evidence="4" type="ordered locus">SPO1596</name>
</gene>
<feature type="chain" id="PRO_0000433899" description="Dimethylsulfoniopropionate lyase DddQ">
    <location>
        <begin position="1"/>
        <end position="201"/>
    </location>
</feature>
<feature type="binding site" evidence="1">
    <location>
        <position position="130"/>
    </location>
    <ligand>
        <name>a divalent metal cation</name>
        <dbReference type="ChEBI" id="CHEBI:60240"/>
    </ligand>
</feature>
<feature type="binding site" evidence="1">
    <location>
        <position position="134"/>
    </location>
    <ligand>
        <name>a divalent metal cation</name>
        <dbReference type="ChEBI" id="CHEBI:60240"/>
    </ligand>
</feature>
<feature type="binding site" evidence="1">
    <location>
        <position position="136"/>
    </location>
    <ligand>
        <name>a divalent metal cation</name>
        <dbReference type="ChEBI" id="CHEBI:60240"/>
    </ligand>
</feature>
<feature type="binding site" evidence="1">
    <location>
        <position position="169"/>
    </location>
    <ligand>
        <name>a divalent metal cation</name>
        <dbReference type="ChEBI" id="CHEBI:60240"/>
    </ligand>
</feature>
<feature type="helix" evidence="5">
    <location>
        <begin position="6"/>
        <end position="21"/>
    </location>
</feature>
<feature type="helix" evidence="5">
    <location>
        <begin position="23"/>
        <end position="28"/>
    </location>
</feature>
<feature type="helix" evidence="5">
    <location>
        <begin position="46"/>
        <end position="53"/>
    </location>
</feature>
<feature type="helix" evidence="5">
    <location>
        <begin position="63"/>
        <end position="72"/>
    </location>
</feature>
<feature type="turn" evidence="5">
    <location>
        <begin position="73"/>
        <end position="75"/>
    </location>
</feature>
<feature type="turn" evidence="5">
    <location>
        <begin position="81"/>
        <end position="84"/>
    </location>
</feature>
<feature type="helix" evidence="5">
    <location>
        <begin position="89"/>
        <end position="92"/>
    </location>
</feature>
<feature type="strand" evidence="5">
    <location>
        <begin position="96"/>
        <end position="102"/>
    </location>
</feature>
<feature type="strand" evidence="5">
    <location>
        <begin position="105"/>
        <end position="108"/>
    </location>
</feature>
<feature type="strand" evidence="5">
    <location>
        <begin position="113"/>
        <end position="119"/>
    </location>
</feature>
<feature type="strand" evidence="5">
    <location>
        <begin position="124"/>
        <end position="129"/>
    </location>
</feature>
<feature type="strand" evidence="5">
    <location>
        <begin position="131"/>
        <end position="141"/>
    </location>
</feature>
<feature type="strand" evidence="5">
    <location>
        <begin position="143"/>
        <end position="147"/>
    </location>
</feature>
<feature type="strand" evidence="5">
    <location>
        <begin position="153"/>
        <end position="155"/>
    </location>
</feature>
<feature type="strand" evidence="5">
    <location>
        <begin position="160"/>
        <end position="163"/>
    </location>
</feature>
<feature type="strand" evidence="5">
    <location>
        <begin position="169"/>
        <end position="172"/>
    </location>
</feature>
<feature type="strand" evidence="5">
    <location>
        <begin position="178"/>
        <end position="186"/>
    </location>
</feature>
<feature type="strand" evidence="5">
    <location>
        <begin position="193"/>
        <end position="195"/>
    </location>
</feature>
<dbReference type="EC" id="4.4.1.3" evidence="1"/>
<dbReference type="EMBL" id="CP000031">
    <property type="protein sequence ID" value="AAV94883.1"/>
    <property type="molecule type" value="Genomic_DNA"/>
</dbReference>
<dbReference type="RefSeq" id="WP_011047333.1">
    <property type="nucleotide sequence ID" value="NC_003911.12"/>
</dbReference>
<dbReference type="PDB" id="5CU1">
    <property type="method" value="X-ray"/>
    <property type="resolution" value="2.30 A"/>
    <property type="chains" value="A=1-201"/>
</dbReference>
<dbReference type="PDBsum" id="5CU1"/>
<dbReference type="SMR" id="Q5LT18"/>
<dbReference type="STRING" id="246200.SPO1596"/>
<dbReference type="PaxDb" id="246200-SPO1596"/>
<dbReference type="DNASU" id="3193536"/>
<dbReference type="KEGG" id="sil:SPO1596"/>
<dbReference type="eggNOG" id="COG1917">
    <property type="taxonomic scope" value="Bacteria"/>
</dbReference>
<dbReference type="HOGENOM" id="CLU_107154_2_0_5"/>
<dbReference type="OrthoDB" id="9083851at2"/>
<dbReference type="BioCyc" id="MetaCyc:MONOMER-16240"/>
<dbReference type="BRENDA" id="4.4.1.3">
    <property type="organism ID" value="8123"/>
</dbReference>
<dbReference type="Proteomes" id="UP000001023">
    <property type="component" value="Chromosome"/>
</dbReference>
<dbReference type="GO" id="GO:0047869">
    <property type="term" value="F:dimethylpropiothetin dethiomethylase activity"/>
    <property type="evidence" value="ECO:0007669"/>
    <property type="project" value="UniProtKB-EC"/>
</dbReference>
<dbReference type="GO" id="GO:0046872">
    <property type="term" value="F:metal ion binding"/>
    <property type="evidence" value="ECO:0007669"/>
    <property type="project" value="UniProtKB-KW"/>
</dbReference>
<dbReference type="CDD" id="cd20282">
    <property type="entry name" value="cupin_DddQ"/>
    <property type="match status" value="1"/>
</dbReference>
<dbReference type="Gene3D" id="2.60.120.10">
    <property type="entry name" value="Jelly Rolls"/>
    <property type="match status" value="1"/>
</dbReference>
<dbReference type="InterPro" id="IPR031723">
    <property type="entry name" value="DMSP_lyase"/>
</dbReference>
<dbReference type="InterPro" id="IPR014710">
    <property type="entry name" value="RmlC-like_jellyroll"/>
</dbReference>
<dbReference type="InterPro" id="IPR011051">
    <property type="entry name" value="RmlC_Cupin_sf"/>
</dbReference>
<dbReference type="Pfam" id="PF16867">
    <property type="entry name" value="DMSP_lyase"/>
    <property type="match status" value="1"/>
</dbReference>
<dbReference type="SUPFAM" id="SSF51182">
    <property type="entry name" value="RmlC-like cupins"/>
    <property type="match status" value="1"/>
</dbReference>
<accession>Q5LT18</accession>
<protein>
    <recommendedName>
        <fullName>Dimethylsulfoniopropionate lyase DddQ</fullName>
        <shortName>DMSP lyase</shortName>
        <ecNumber evidence="1">4.4.1.3</ecNumber>
    </recommendedName>
</protein>
<name>DDDQ_RUEPO</name>
<keyword id="KW-0002">3D-structure</keyword>
<keyword id="KW-0456">Lyase</keyword>
<keyword id="KW-0479">Metal-binding</keyword>
<keyword id="KW-1185">Reference proteome</keyword>
<sequence>MTQTDPAFQNLLAEFQALHAREPALAGFVALPDSLTPQPVTPVRIPPAALMESDPDLTTTAYAAIRDAFIAAGAVAQWRLTYQGSRLGADFMDRFACYCLIGEGGPFASDSLAAYVVYMPAGLYYPFHQHPAEEIYFILAGEAEFLMEGHPPRRLGPGDHVFHPSGHPHATRTYDRPFMALVLWRGDLETAPVLTYPEGEI</sequence>
<proteinExistence type="evidence at protein level"/>
<organism>
    <name type="scientific">Ruegeria pomeroyi (strain ATCC 700808 / DSM 15171 / DSS-3)</name>
    <name type="common">Silicibacter pomeroyi</name>
    <dbReference type="NCBI Taxonomy" id="246200"/>
    <lineage>
        <taxon>Bacteria</taxon>
        <taxon>Pseudomonadati</taxon>
        <taxon>Pseudomonadota</taxon>
        <taxon>Alphaproteobacteria</taxon>
        <taxon>Rhodobacterales</taxon>
        <taxon>Roseobacteraceae</taxon>
        <taxon>Ruegeria</taxon>
    </lineage>
</organism>
<evidence type="ECO:0000250" key="1">
    <source>
        <dbReference type="UniProtKB" id="D0CY60"/>
    </source>
</evidence>
<evidence type="ECO:0000269" key="2">
    <source>
    </source>
</evidence>
<evidence type="ECO:0000305" key="3"/>
<evidence type="ECO:0000312" key="4">
    <source>
        <dbReference type="EMBL" id="AAV94883.1"/>
    </source>
</evidence>
<evidence type="ECO:0007829" key="5">
    <source>
        <dbReference type="PDB" id="5CU1"/>
    </source>
</evidence>
<reference key="1">
    <citation type="journal article" date="2004" name="Nature">
        <title>Genome sequence of Silicibacter pomeroyi reveals adaptations to the marine environment.</title>
        <authorList>
            <person name="Moran M.A."/>
            <person name="Buchan A."/>
            <person name="Gonzalez J.M."/>
            <person name="Heidelberg J.F."/>
            <person name="Whitman W.B."/>
            <person name="Kiene R.P."/>
            <person name="Henriksen J.R."/>
            <person name="King G.M."/>
            <person name="Belas R."/>
            <person name="Fuqua C."/>
            <person name="Brinkac L.M."/>
            <person name="Lewis M."/>
            <person name="Johri S."/>
            <person name="Weaver B."/>
            <person name="Pai G."/>
            <person name="Eisen J.A."/>
            <person name="Rahe E."/>
            <person name="Sheldon W.M."/>
            <person name="Ye W."/>
            <person name="Miller T.R."/>
            <person name="Carlton J."/>
            <person name="Rasko D.A."/>
            <person name="Paulsen I.T."/>
            <person name="Ren Q."/>
            <person name="Daugherty S.C."/>
            <person name="DeBoy R.T."/>
            <person name="Dodson R.J."/>
            <person name="Durkin A.S."/>
            <person name="Madupu R."/>
            <person name="Nelson W.C."/>
            <person name="Sullivan S.A."/>
            <person name="Rosovitz M.J."/>
            <person name="Haft D.H."/>
            <person name="Selengut J."/>
            <person name="Ward N."/>
        </authorList>
    </citation>
    <scope>NUCLEOTIDE SEQUENCE [LARGE SCALE GENOMIC DNA]</scope>
    <source>
        <strain>ATCC 700808 / DSM 15171 / DSS-3</strain>
    </source>
</reference>
<reference key="2">
    <citation type="journal article" date="2014" name="Stand. Genomic Sci.">
        <title>An updated genome annotation for the model marine bacterium Ruegeria pomeroyi DSS-3.</title>
        <authorList>
            <person name="Rivers A.R."/>
            <person name="Smith C.B."/>
            <person name="Moran M.A."/>
        </authorList>
    </citation>
    <scope>GENOME REANNOTATION</scope>
    <source>
        <strain>ATCC 700808 / DSM 15171 / DSS-3</strain>
    </source>
</reference>
<reference key="3">
    <citation type="journal article" date="2011" name="Environ. Microbiol.">
        <title>DddQ, a novel, cupin-containing, dimethylsulfoniopropionate lyase in marine roseobacters and in uncultured marine bacteria.</title>
        <authorList>
            <person name="Todd J.D."/>
            <person name="Curson A.R."/>
            <person name="Kirkwood M."/>
            <person name="Sullivan M.J."/>
            <person name="Green R.T."/>
            <person name="Johnston A.W."/>
        </authorList>
    </citation>
    <scope>FUNCTION</scope>
    <scope>DISRUPTION PHENOTYPE</scope>
    <source>
        <strain>ATCC 700808 / DSM 15171 / DSS-3</strain>
    </source>
</reference>